<keyword id="KW-0963">Cytoplasm</keyword>
<keyword id="KW-0903">Direct protein sequencing</keyword>
<keyword id="KW-0378">Hydrolase</keyword>
<keyword id="KW-1185">Reference proteome</keyword>
<gene>
    <name type="primary">ACH1</name>
    <name type="ordered locus">CAALFM_C502000CA</name>
    <name type="ORF">CaO19.10681</name>
    <name type="ORF">CaO19.3171</name>
</gene>
<proteinExistence type="evidence at protein level"/>
<sequence>MSAILKQRVRYAPYLKKLRTGEQCIDLFKHGQYLGWSGFTGVGAPKVIPTTLVDHVEKNNLQGKLGFHLFVGASAGPEESRWAENNMILTRAPHQVGKPIAAAINDGRTQFFDKHLSMFPQDLTYGFYTKDKPNGSNLDYTIIEATAITEDGSIVPGPAVGASPEMISVSDKIIIEVNTKTPSFEGIHDIDMPVNPPFRQPYPHTSADFKIGKTAIPVDPEKVVAIVESTSGDKVPPNTPSDEQSRGIANHLIEFLEHEVKQGRLPANLHPLQSGIGNIANAVVEGLASSNFKNLTVWTEVLQDSFLDFFESGSLDYATATSIRLTNDGFKKFYDNWDTYSKKLCLRSQVVSNSPEIIRRLGVIAMNTPVEVDIYGHANSTNVMGSRMLNGLGGSADFLRNAKLSIMHTPSARPSKVDPTGLSCIVPMASHVDQTEHDLDVVVTEQGLADLRGLAPKARAKVIIDKCSHPDYKPQLQEYYDRSVFYATKKKTLHEPHILRDVFKMHLNFQENGTMKLDSWDQKF</sequence>
<protein>
    <recommendedName>
        <fullName>Acetyl-CoA hydrolase</fullName>
        <ecNumber>3.1.2.1</ecNumber>
    </recommendedName>
    <alternativeName>
        <fullName>Acetyl-CoA deacylase</fullName>
        <shortName>Acetyl-CoA acylase</shortName>
    </alternativeName>
</protein>
<evidence type="ECO:0000250" key="1"/>
<evidence type="ECO:0000250" key="2">
    <source>
        <dbReference type="UniProtKB" id="B3EY95"/>
    </source>
</evidence>
<evidence type="ECO:0000269" key="3">
    <source>
    </source>
</evidence>
<evidence type="ECO:0000305" key="4"/>
<dbReference type="EC" id="3.1.2.1"/>
<dbReference type="EMBL" id="CP017627">
    <property type="protein sequence ID" value="AOW29629.1"/>
    <property type="molecule type" value="Genomic_DNA"/>
</dbReference>
<dbReference type="RefSeq" id="XP_714589.2">
    <property type="nucleotide sequence ID" value="XM_709496.2"/>
</dbReference>
<dbReference type="SMR" id="P83773"/>
<dbReference type="BioGRID" id="1226697">
    <property type="interactions" value="1"/>
</dbReference>
<dbReference type="FunCoup" id="P83773">
    <property type="interactions" value="227"/>
</dbReference>
<dbReference type="STRING" id="237561.P83773"/>
<dbReference type="EnsemblFungi" id="C5_02000C_A-T">
    <property type="protein sequence ID" value="C5_02000C_A-T-p1"/>
    <property type="gene ID" value="C5_02000C_A"/>
</dbReference>
<dbReference type="GeneID" id="3643773"/>
<dbReference type="KEGG" id="cal:CAALFM_C502000CA"/>
<dbReference type="CGD" id="CAL0000189008">
    <property type="gene designation" value="ACH1"/>
</dbReference>
<dbReference type="VEuPathDB" id="FungiDB:C5_02000C_A"/>
<dbReference type="eggNOG" id="KOG2828">
    <property type="taxonomic scope" value="Eukaryota"/>
</dbReference>
<dbReference type="HOGENOM" id="CLU_019748_3_0_1"/>
<dbReference type="InParanoid" id="P83773"/>
<dbReference type="OMA" id="SCIVPMV"/>
<dbReference type="OrthoDB" id="10250396at2759"/>
<dbReference type="PRO" id="PR:P83773"/>
<dbReference type="Proteomes" id="UP000000559">
    <property type="component" value="Chromosome 5"/>
</dbReference>
<dbReference type="GO" id="GO:0005829">
    <property type="term" value="C:cytosol"/>
    <property type="evidence" value="ECO:0000316"/>
    <property type="project" value="CGD"/>
</dbReference>
<dbReference type="GO" id="GO:0005739">
    <property type="term" value="C:mitochondrion"/>
    <property type="evidence" value="ECO:0000316"/>
    <property type="project" value="CGD"/>
</dbReference>
<dbReference type="GO" id="GO:0008775">
    <property type="term" value="F:acetate CoA-transferase activity"/>
    <property type="evidence" value="ECO:0000318"/>
    <property type="project" value="GO_Central"/>
</dbReference>
<dbReference type="GO" id="GO:0003986">
    <property type="term" value="F:acetyl-CoA hydrolase activity"/>
    <property type="evidence" value="ECO:0000316"/>
    <property type="project" value="CGD"/>
</dbReference>
<dbReference type="GO" id="GO:0006083">
    <property type="term" value="P:acetate metabolic process"/>
    <property type="evidence" value="ECO:0000316"/>
    <property type="project" value="CGD"/>
</dbReference>
<dbReference type="GO" id="GO:0071469">
    <property type="term" value="P:cellular response to alkaline pH"/>
    <property type="evidence" value="ECO:0000315"/>
    <property type="project" value="CGD"/>
</dbReference>
<dbReference type="FunFam" id="3.30.750.70:FF:000002">
    <property type="entry name" value="Acetyl-CoA hydrolase Ach1"/>
    <property type="match status" value="1"/>
</dbReference>
<dbReference type="FunFam" id="3.40.1080.20:FF:000001">
    <property type="entry name" value="Acetyl-CoA hydrolase Ach1"/>
    <property type="match status" value="1"/>
</dbReference>
<dbReference type="FunFam" id="3.40.1080.10:FF:000003">
    <property type="entry name" value="Acetyl-coA hydrolase Ach1"/>
    <property type="match status" value="1"/>
</dbReference>
<dbReference type="Gene3D" id="3.30.750.70">
    <property type="entry name" value="4-hydroxybutyrate coenzyme like domains"/>
    <property type="match status" value="1"/>
</dbReference>
<dbReference type="Gene3D" id="3.40.1080.20">
    <property type="entry name" value="Acetyl-CoA hydrolase/transferase C-terminal domain"/>
    <property type="match status" value="1"/>
</dbReference>
<dbReference type="Gene3D" id="3.40.1080.10">
    <property type="entry name" value="Glutaconate Coenzyme A-transferase"/>
    <property type="match status" value="1"/>
</dbReference>
<dbReference type="InterPro" id="IPR026888">
    <property type="entry name" value="AcetylCoA_hyd_C"/>
</dbReference>
<dbReference type="InterPro" id="IPR038460">
    <property type="entry name" value="AcetylCoA_hyd_C_sf"/>
</dbReference>
<dbReference type="InterPro" id="IPR046433">
    <property type="entry name" value="ActCoA_hydro"/>
</dbReference>
<dbReference type="InterPro" id="IPR003702">
    <property type="entry name" value="ActCoA_hydro_N"/>
</dbReference>
<dbReference type="InterPro" id="IPR037171">
    <property type="entry name" value="NagB/RpiA_transferase-like"/>
</dbReference>
<dbReference type="PANTHER" id="PTHR43609">
    <property type="entry name" value="ACETYL-COA HYDROLASE"/>
    <property type="match status" value="1"/>
</dbReference>
<dbReference type="PANTHER" id="PTHR43609:SF1">
    <property type="entry name" value="ACETYL-COA HYDROLASE"/>
    <property type="match status" value="1"/>
</dbReference>
<dbReference type="Pfam" id="PF13336">
    <property type="entry name" value="AcetylCoA_hyd_C"/>
    <property type="match status" value="1"/>
</dbReference>
<dbReference type="Pfam" id="PF02550">
    <property type="entry name" value="AcetylCoA_hydro"/>
    <property type="match status" value="1"/>
</dbReference>
<dbReference type="SUPFAM" id="SSF100950">
    <property type="entry name" value="NagB/RpiA/CoA transferase-like"/>
    <property type="match status" value="2"/>
</dbReference>
<name>ACH1_CANAL</name>
<reference key="1">
    <citation type="journal article" date="2004" name="Proc. Natl. Acad. Sci. U.S.A.">
        <title>The diploid genome sequence of Candida albicans.</title>
        <authorList>
            <person name="Jones T."/>
            <person name="Federspiel N.A."/>
            <person name="Chibana H."/>
            <person name="Dungan J."/>
            <person name="Kalman S."/>
            <person name="Magee B.B."/>
            <person name="Newport G."/>
            <person name="Thorstenson Y.R."/>
            <person name="Agabian N."/>
            <person name="Magee P.T."/>
            <person name="Davis R.W."/>
            <person name="Scherer S."/>
        </authorList>
    </citation>
    <scope>NUCLEOTIDE SEQUENCE [LARGE SCALE GENOMIC DNA]</scope>
    <source>
        <strain>SC5314 / ATCC MYA-2876</strain>
    </source>
</reference>
<reference key="2">
    <citation type="journal article" date="2007" name="Genome Biol.">
        <title>Assembly of the Candida albicans genome into sixteen supercontigs aligned on the eight chromosomes.</title>
        <authorList>
            <person name="van het Hoog M."/>
            <person name="Rast T.J."/>
            <person name="Martchenko M."/>
            <person name="Grindle S."/>
            <person name="Dignard D."/>
            <person name="Hogues H."/>
            <person name="Cuomo C."/>
            <person name="Berriman M."/>
            <person name="Scherer S."/>
            <person name="Magee B.B."/>
            <person name="Whiteway M."/>
            <person name="Chibana H."/>
            <person name="Nantel A."/>
            <person name="Magee P.T."/>
        </authorList>
    </citation>
    <scope>GENOME REANNOTATION</scope>
    <source>
        <strain>SC5314 / ATCC MYA-2876</strain>
    </source>
</reference>
<reference key="3">
    <citation type="journal article" date="2013" name="Genome Biol.">
        <title>Assembly of a phased diploid Candida albicans genome facilitates allele-specific measurements and provides a simple model for repeat and indel structure.</title>
        <authorList>
            <person name="Muzzey D."/>
            <person name="Schwartz K."/>
            <person name="Weissman J.S."/>
            <person name="Sherlock G."/>
        </authorList>
    </citation>
    <scope>NUCLEOTIDE SEQUENCE [LARGE SCALE GENOMIC DNA]</scope>
    <scope>GENOME REANNOTATION</scope>
    <source>
        <strain>SC5314 / ATCC MYA-2876</strain>
    </source>
</reference>
<reference key="4">
    <citation type="journal article" date="2004" name="Proteomics">
        <title>Proteomics-based identification of novel Candida albicans antigens for diagnosis of systemic candidiasis in patients with underlying hematological malignancies.</title>
        <authorList>
            <person name="Pitarch A."/>
            <person name="Abian J."/>
            <person name="Carrascal M."/>
            <person name="Sanchez M."/>
            <person name="Nombela C."/>
            <person name="Gil C."/>
        </authorList>
    </citation>
    <scope>PROTEIN SEQUENCE OF 82-91 AND 350-359</scope>
    <scope>SUBCELLULAR LOCATION</scope>
    <scope>ANTIGENICITY</scope>
    <source>
        <strain>SC5314 / ATCC MYA-2876</strain>
        <tissue>Protoplast</tissue>
    </source>
</reference>
<accession>P83773</accession>
<accession>A0A1D8PNC1</accession>
<accession>Q59YK9</accession>
<feature type="chain" id="PRO_0000215517" description="Acetyl-CoA hydrolase">
    <location>
        <begin position="1"/>
        <end position="524"/>
    </location>
</feature>
<feature type="active site" description="5-glutamyl coenzyme A thioester intermediate" evidence="2">
    <location>
        <position position="300"/>
    </location>
</feature>
<feature type="binding site" evidence="2">
    <location>
        <begin position="275"/>
        <end position="279"/>
    </location>
    <ligand>
        <name>CoA</name>
        <dbReference type="ChEBI" id="CHEBI:57287"/>
    </ligand>
</feature>
<feature type="binding site" evidence="2">
    <location>
        <position position="390"/>
    </location>
    <ligand>
        <name>CoA</name>
        <dbReference type="ChEBI" id="CHEBI:57287"/>
    </ligand>
</feature>
<feature type="binding site" evidence="2">
    <location>
        <position position="394"/>
    </location>
    <ligand>
        <name>CoA</name>
        <dbReference type="ChEBI" id="CHEBI:57287"/>
    </ligand>
</feature>
<organism>
    <name type="scientific">Candida albicans (strain SC5314 / ATCC MYA-2876)</name>
    <name type="common">Yeast</name>
    <dbReference type="NCBI Taxonomy" id="237561"/>
    <lineage>
        <taxon>Eukaryota</taxon>
        <taxon>Fungi</taxon>
        <taxon>Dikarya</taxon>
        <taxon>Ascomycota</taxon>
        <taxon>Saccharomycotina</taxon>
        <taxon>Pichiomycetes</taxon>
        <taxon>Debaryomycetaceae</taxon>
        <taxon>Candida/Lodderomyces clade</taxon>
        <taxon>Candida</taxon>
    </lineage>
</organism>
<comment type="function">
    <text evidence="1">Presumably involved in regulating the intracellular acetyl-CoA pool for fatty acid and cholesterol synthesis and fatty acid oxidation.</text>
</comment>
<comment type="catalytic activity">
    <reaction>
        <text>acetyl-CoA + H2O = acetate + CoA + H(+)</text>
        <dbReference type="Rhea" id="RHEA:20289"/>
        <dbReference type="ChEBI" id="CHEBI:15377"/>
        <dbReference type="ChEBI" id="CHEBI:15378"/>
        <dbReference type="ChEBI" id="CHEBI:30089"/>
        <dbReference type="ChEBI" id="CHEBI:57287"/>
        <dbReference type="ChEBI" id="CHEBI:57288"/>
        <dbReference type="EC" id="3.1.2.1"/>
    </reaction>
</comment>
<comment type="subcellular location">
    <subcellularLocation>
        <location evidence="3">Cytoplasm</location>
    </subcellularLocation>
</comment>
<comment type="miscellaneous">
    <text>Has antigenic properties. Elicits a specific immune response in systemic candidiasis human patients undergoing malignant hematological disorders.</text>
</comment>
<comment type="similarity">
    <text evidence="4">Belongs to the acetyl-CoA hydrolase/transferase family.</text>
</comment>